<name>ATPA_MYCSS</name>
<keyword id="KW-0066">ATP synthesis</keyword>
<keyword id="KW-0067">ATP-binding</keyword>
<keyword id="KW-1003">Cell membrane</keyword>
<keyword id="KW-0139">CF(1)</keyword>
<keyword id="KW-0375">Hydrogen ion transport</keyword>
<keyword id="KW-0406">Ion transport</keyword>
<keyword id="KW-0472">Membrane</keyword>
<keyword id="KW-0547">Nucleotide-binding</keyword>
<keyword id="KW-1278">Translocase</keyword>
<keyword id="KW-0813">Transport</keyword>
<sequence length="548" mass="59639">MAELTISAADIQGAIEDYVANFATDTEREEIGTVIDAGDGIAHVEGLPSVMTQELLEFPGGVLGVALNLDEHSIGAVILGDFEKIEEGQQVKRTGEVLSVPVGDGYLGRVVNPLGQPIDGRGEIETTDRRALELQAPSVVQRQGVSEPLQTGIKAIDSQTPIGRGQRQLIIGDRKTGKTAVCVDTILNQRQNWETGDPNQQVRCVYVAIGQKGTTIASVRRTLEEGGAMDYTTIVAAPASDSAGFKWLAPYTGSAIAQHWMYDGKHVLIVFDDLTKHAEAYRAISLLLRRPPGREAFPGDVFYLHSRLLERCAKLSDELGGGSMTGLPLIETKANDISAYIPTNVISITDGQCFLETDLFNQGVRPAINVGVSVSRVGGAAQIKAMKEVAGSLRLDLSQYRELESFAAFASDLDATSKAQLDRGARLVELLKQPQNSPMPVEEQVVAIFLGTRGHLDTVPVEDVQRFEQELLEHVRSSKEEIFTEIRESKKLSDELEKTLTDVVNEFKKGFETTSGESVVPDENVEAMSEDDVEKESVKVRKPAPKKK</sequence>
<dbReference type="EC" id="7.1.2.2" evidence="1"/>
<dbReference type="EMBL" id="CP000384">
    <property type="protein sequence ID" value="ABG09983.1"/>
    <property type="molecule type" value="Genomic_DNA"/>
</dbReference>
<dbReference type="SMR" id="Q1B551"/>
<dbReference type="KEGG" id="mmc:Mmcs_3878"/>
<dbReference type="HOGENOM" id="CLU_010091_2_1_11"/>
<dbReference type="BioCyc" id="MSP164756:G1G6O-3962-MONOMER"/>
<dbReference type="GO" id="GO:0005886">
    <property type="term" value="C:plasma membrane"/>
    <property type="evidence" value="ECO:0007669"/>
    <property type="project" value="UniProtKB-SubCell"/>
</dbReference>
<dbReference type="GO" id="GO:0045259">
    <property type="term" value="C:proton-transporting ATP synthase complex"/>
    <property type="evidence" value="ECO:0007669"/>
    <property type="project" value="UniProtKB-KW"/>
</dbReference>
<dbReference type="GO" id="GO:0043531">
    <property type="term" value="F:ADP binding"/>
    <property type="evidence" value="ECO:0007669"/>
    <property type="project" value="TreeGrafter"/>
</dbReference>
<dbReference type="GO" id="GO:0005524">
    <property type="term" value="F:ATP binding"/>
    <property type="evidence" value="ECO:0007669"/>
    <property type="project" value="UniProtKB-UniRule"/>
</dbReference>
<dbReference type="GO" id="GO:0046933">
    <property type="term" value="F:proton-transporting ATP synthase activity, rotational mechanism"/>
    <property type="evidence" value="ECO:0007669"/>
    <property type="project" value="UniProtKB-UniRule"/>
</dbReference>
<dbReference type="CDD" id="cd18113">
    <property type="entry name" value="ATP-synt_F1_alpha_C"/>
    <property type="match status" value="1"/>
</dbReference>
<dbReference type="CDD" id="cd18116">
    <property type="entry name" value="ATP-synt_F1_alpha_N"/>
    <property type="match status" value="1"/>
</dbReference>
<dbReference type="CDD" id="cd01132">
    <property type="entry name" value="F1-ATPase_alpha_CD"/>
    <property type="match status" value="1"/>
</dbReference>
<dbReference type="FunFam" id="1.20.150.20:FF:000001">
    <property type="entry name" value="ATP synthase subunit alpha"/>
    <property type="match status" value="1"/>
</dbReference>
<dbReference type="FunFam" id="2.40.30.20:FF:000001">
    <property type="entry name" value="ATP synthase subunit alpha"/>
    <property type="match status" value="1"/>
</dbReference>
<dbReference type="FunFam" id="3.40.50.300:FF:000002">
    <property type="entry name" value="ATP synthase subunit alpha"/>
    <property type="match status" value="1"/>
</dbReference>
<dbReference type="Gene3D" id="2.40.30.20">
    <property type="match status" value="1"/>
</dbReference>
<dbReference type="Gene3D" id="1.20.150.20">
    <property type="entry name" value="ATP synthase alpha/beta chain, C-terminal domain"/>
    <property type="match status" value="1"/>
</dbReference>
<dbReference type="Gene3D" id="3.40.50.300">
    <property type="entry name" value="P-loop containing nucleotide triphosphate hydrolases"/>
    <property type="match status" value="1"/>
</dbReference>
<dbReference type="HAMAP" id="MF_01346">
    <property type="entry name" value="ATP_synth_alpha_bact"/>
    <property type="match status" value="1"/>
</dbReference>
<dbReference type="InterPro" id="IPR023366">
    <property type="entry name" value="ATP_synth_asu-like_sf"/>
</dbReference>
<dbReference type="InterPro" id="IPR000793">
    <property type="entry name" value="ATP_synth_asu_C"/>
</dbReference>
<dbReference type="InterPro" id="IPR038376">
    <property type="entry name" value="ATP_synth_asu_C_sf"/>
</dbReference>
<dbReference type="InterPro" id="IPR033732">
    <property type="entry name" value="ATP_synth_F1_a_nt-bd_dom"/>
</dbReference>
<dbReference type="InterPro" id="IPR005294">
    <property type="entry name" value="ATP_synth_F1_asu"/>
</dbReference>
<dbReference type="InterPro" id="IPR020003">
    <property type="entry name" value="ATPase_a/bsu_AS"/>
</dbReference>
<dbReference type="InterPro" id="IPR004100">
    <property type="entry name" value="ATPase_F1/V1/A1_a/bsu_N"/>
</dbReference>
<dbReference type="InterPro" id="IPR036121">
    <property type="entry name" value="ATPase_F1/V1/A1_a/bsu_N_sf"/>
</dbReference>
<dbReference type="InterPro" id="IPR000194">
    <property type="entry name" value="ATPase_F1/V1/A1_a/bsu_nucl-bd"/>
</dbReference>
<dbReference type="InterPro" id="IPR027417">
    <property type="entry name" value="P-loop_NTPase"/>
</dbReference>
<dbReference type="NCBIfam" id="TIGR00962">
    <property type="entry name" value="atpA"/>
    <property type="match status" value="1"/>
</dbReference>
<dbReference type="NCBIfam" id="NF009884">
    <property type="entry name" value="PRK13343.1"/>
    <property type="match status" value="1"/>
</dbReference>
<dbReference type="PANTHER" id="PTHR48082">
    <property type="entry name" value="ATP SYNTHASE SUBUNIT ALPHA, MITOCHONDRIAL"/>
    <property type="match status" value="1"/>
</dbReference>
<dbReference type="PANTHER" id="PTHR48082:SF2">
    <property type="entry name" value="ATP SYNTHASE SUBUNIT ALPHA, MITOCHONDRIAL"/>
    <property type="match status" value="1"/>
</dbReference>
<dbReference type="Pfam" id="PF00006">
    <property type="entry name" value="ATP-synt_ab"/>
    <property type="match status" value="1"/>
</dbReference>
<dbReference type="Pfam" id="PF00306">
    <property type="entry name" value="ATP-synt_ab_C"/>
    <property type="match status" value="1"/>
</dbReference>
<dbReference type="Pfam" id="PF02874">
    <property type="entry name" value="ATP-synt_ab_N"/>
    <property type="match status" value="1"/>
</dbReference>
<dbReference type="SUPFAM" id="SSF47917">
    <property type="entry name" value="C-terminal domain of alpha and beta subunits of F1 ATP synthase"/>
    <property type="match status" value="1"/>
</dbReference>
<dbReference type="SUPFAM" id="SSF50615">
    <property type="entry name" value="N-terminal domain of alpha and beta subunits of F1 ATP synthase"/>
    <property type="match status" value="1"/>
</dbReference>
<dbReference type="SUPFAM" id="SSF52540">
    <property type="entry name" value="P-loop containing nucleoside triphosphate hydrolases"/>
    <property type="match status" value="1"/>
</dbReference>
<dbReference type="PROSITE" id="PS00152">
    <property type="entry name" value="ATPASE_ALPHA_BETA"/>
    <property type="match status" value="1"/>
</dbReference>
<reference key="1">
    <citation type="submission" date="2006-06" db="EMBL/GenBank/DDBJ databases">
        <title>Complete sequence of chromosome of Mycobacterium sp. MCS.</title>
        <authorList>
            <consortium name="US DOE Joint Genome Institute"/>
            <person name="Copeland A."/>
            <person name="Lucas S."/>
            <person name="Lapidus A."/>
            <person name="Barry K."/>
            <person name="Detter J.C."/>
            <person name="Glavina del Rio T."/>
            <person name="Hammon N."/>
            <person name="Israni S."/>
            <person name="Dalin E."/>
            <person name="Tice H."/>
            <person name="Pitluck S."/>
            <person name="Martinez M."/>
            <person name="Schmutz J."/>
            <person name="Larimer F."/>
            <person name="Land M."/>
            <person name="Hauser L."/>
            <person name="Kyrpides N."/>
            <person name="Kim E."/>
            <person name="Miller C.D."/>
            <person name="Hughes J.E."/>
            <person name="Anderson A.J."/>
            <person name="Sims R.C."/>
            <person name="Richardson P."/>
        </authorList>
    </citation>
    <scope>NUCLEOTIDE SEQUENCE [LARGE SCALE GENOMIC DNA]</scope>
    <source>
        <strain>MCS</strain>
    </source>
</reference>
<comment type="function">
    <text evidence="1">Produces ATP from ADP in the presence of a proton gradient across the membrane. The alpha chain is a regulatory subunit.</text>
</comment>
<comment type="catalytic activity">
    <reaction evidence="1">
        <text>ATP + H2O + 4 H(+)(in) = ADP + phosphate + 5 H(+)(out)</text>
        <dbReference type="Rhea" id="RHEA:57720"/>
        <dbReference type="ChEBI" id="CHEBI:15377"/>
        <dbReference type="ChEBI" id="CHEBI:15378"/>
        <dbReference type="ChEBI" id="CHEBI:30616"/>
        <dbReference type="ChEBI" id="CHEBI:43474"/>
        <dbReference type="ChEBI" id="CHEBI:456216"/>
        <dbReference type="EC" id="7.1.2.2"/>
    </reaction>
</comment>
<comment type="subunit">
    <text evidence="1">F-type ATPases have 2 components, CF(1) - the catalytic core - and CF(0) - the membrane proton channel. CF(1) has five subunits: alpha(3), beta(3), gamma(1), delta(1), epsilon(1). CF(0) has three main subunits: a(1), b(2) and c(9-12). The alpha and beta chains form an alternating ring which encloses part of the gamma chain. CF(1) is attached to CF(0) by a central stalk formed by the gamma and epsilon chains, while a peripheral stalk is formed by the delta and b chains.</text>
</comment>
<comment type="subcellular location">
    <subcellularLocation>
        <location evidence="1">Cell membrane</location>
        <topology evidence="1">Peripheral membrane protein</topology>
    </subcellularLocation>
</comment>
<comment type="similarity">
    <text evidence="1">Belongs to the ATPase alpha/beta chains family.</text>
</comment>
<protein>
    <recommendedName>
        <fullName evidence="1">ATP synthase subunit alpha</fullName>
        <ecNumber evidence="1">7.1.2.2</ecNumber>
    </recommendedName>
    <alternativeName>
        <fullName evidence="1">ATP synthase F1 sector subunit alpha</fullName>
    </alternativeName>
    <alternativeName>
        <fullName evidence="1">F-ATPase subunit alpha</fullName>
    </alternativeName>
</protein>
<accession>Q1B551</accession>
<gene>
    <name evidence="1" type="primary">atpA</name>
    <name type="ordered locus">Mmcs_3878</name>
</gene>
<organism>
    <name type="scientific">Mycobacterium sp. (strain MCS)</name>
    <dbReference type="NCBI Taxonomy" id="164756"/>
    <lineage>
        <taxon>Bacteria</taxon>
        <taxon>Bacillati</taxon>
        <taxon>Actinomycetota</taxon>
        <taxon>Actinomycetes</taxon>
        <taxon>Mycobacteriales</taxon>
        <taxon>Mycobacteriaceae</taxon>
        <taxon>Mycobacterium</taxon>
    </lineage>
</organism>
<feature type="chain" id="PRO_0000302672" description="ATP synthase subunit alpha">
    <location>
        <begin position="1"/>
        <end position="548"/>
    </location>
</feature>
<feature type="region of interest" description="Disordered" evidence="2">
    <location>
        <begin position="511"/>
        <end position="548"/>
    </location>
</feature>
<feature type="compositionally biased region" description="Acidic residues" evidence="2">
    <location>
        <begin position="523"/>
        <end position="534"/>
    </location>
</feature>
<feature type="binding site" evidence="1">
    <location>
        <begin position="172"/>
        <end position="179"/>
    </location>
    <ligand>
        <name>ATP</name>
        <dbReference type="ChEBI" id="CHEBI:30616"/>
    </ligand>
</feature>
<feature type="site" description="Required for activity" evidence="1">
    <location>
        <position position="373"/>
    </location>
</feature>
<evidence type="ECO:0000255" key="1">
    <source>
        <dbReference type="HAMAP-Rule" id="MF_01346"/>
    </source>
</evidence>
<evidence type="ECO:0000256" key="2">
    <source>
        <dbReference type="SAM" id="MobiDB-lite"/>
    </source>
</evidence>
<proteinExistence type="inferred from homology"/>